<evidence type="ECO:0000255" key="1">
    <source>
        <dbReference type="HAMAP-Rule" id="MF_00378"/>
    </source>
</evidence>
<organism>
    <name type="scientific">Pectobacterium atrosepticum (strain SCRI 1043 / ATCC BAA-672)</name>
    <name type="common">Erwinia carotovora subsp. atroseptica</name>
    <dbReference type="NCBI Taxonomy" id="218491"/>
    <lineage>
        <taxon>Bacteria</taxon>
        <taxon>Pseudomonadati</taxon>
        <taxon>Pseudomonadota</taxon>
        <taxon>Gammaproteobacteria</taxon>
        <taxon>Enterobacterales</taxon>
        <taxon>Pectobacteriaceae</taxon>
        <taxon>Pectobacterium</taxon>
    </lineage>
</organism>
<protein>
    <recommendedName>
        <fullName evidence="1">Exodeoxyribonuclease 7 large subunit</fullName>
        <ecNumber evidence="1">3.1.11.6</ecNumber>
    </recommendedName>
    <alternativeName>
        <fullName evidence="1">Exodeoxyribonuclease VII large subunit</fullName>
        <shortName evidence="1">Exonuclease VII large subunit</shortName>
    </alternativeName>
</protein>
<name>EX7L_PECAS</name>
<feature type="chain" id="PRO_0000273655" description="Exodeoxyribonuclease 7 large subunit">
    <location>
        <begin position="1"/>
        <end position="462"/>
    </location>
</feature>
<sequence length="462" mass="52390">MSQFPSSAIFTVSRLNQTVRQLLEMEMGQIWLSGEISNLSQPSSGHWYFTLKDERAQVRCAMFRTSNRRVTFRPQNGQQIIIRATITLYEPRGDYQLLAESMQPAGDGLLQQQFEQLKQRLAAEGLFDQQFKQVLPSPAKQVGVITSVSGAALHDILQVLQRRDPSLPVIVYPTSVQGAEAPLQIVRAIELANQRDECDVLIVGRGGGSLEDLWSFNDERVARAIFASRIPIVSAVGHETDVTIADFVGDLRAPTPSAAAELVSRNQLELLRQIQSQRQRLEMAMDYYLAQRNREFTRLHHRLQQQHPQLRLARQQAQLVKLRQRLDDAMQQQLRQTSRRSERLQQRLMQQQPQTRIHRAQQRLQQLSYQMQSAVDRQLNQNKQKLGVACSRLEGVSPLATLARGYNVTTASDGKVLKNVAQITPGETLKTRLQDGWVESQVTTLAPNLSSVKKRRKSSSQS</sequence>
<gene>
    <name evidence="1" type="primary">xseA</name>
    <name type="ordered locus">ECA3210</name>
</gene>
<accession>Q6D286</accession>
<reference key="1">
    <citation type="journal article" date="2004" name="Proc. Natl. Acad. Sci. U.S.A.">
        <title>Genome sequence of the enterobacterial phytopathogen Erwinia carotovora subsp. atroseptica and characterization of virulence factors.</title>
        <authorList>
            <person name="Bell K.S."/>
            <person name="Sebaihia M."/>
            <person name="Pritchard L."/>
            <person name="Holden M.T.G."/>
            <person name="Hyman L.J."/>
            <person name="Holeva M.C."/>
            <person name="Thomson N.R."/>
            <person name="Bentley S.D."/>
            <person name="Churcher L.J.C."/>
            <person name="Mungall K."/>
            <person name="Atkin R."/>
            <person name="Bason N."/>
            <person name="Brooks K."/>
            <person name="Chillingworth T."/>
            <person name="Clark K."/>
            <person name="Doggett J."/>
            <person name="Fraser A."/>
            <person name="Hance Z."/>
            <person name="Hauser H."/>
            <person name="Jagels K."/>
            <person name="Moule S."/>
            <person name="Norbertczak H."/>
            <person name="Ormond D."/>
            <person name="Price C."/>
            <person name="Quail M.A."/>
            <person name="Sanders M."/>
            <person name="Walker D."/>
            <person name="Whitehead S."/>
            <person name="Salmond G.P.C."/>
            <person name="Birch P.R.J."/>
            <person name="Parkhill J."/>
            <person name="Toth I.K."/>
        </authorList>
    </citation>
    <scope>NUCLEOTIDE SEQUENCE [LARGE SCALE GENOMIC DNA]</scope>
    <source>
        <strain>SCRI 1043 / ATCC BAA-672</strain>
    </source>
</reference>
<keyword id="KW-0963">Cytoplasm</keyword>
<keyword id="KW-0269">Exonuclease</keyword>
<keyword id="KW-0378">Hydrolase</keyword>
<keyword id="KW-0540">Nuclease</keyword>
<keyword id="KW-1185">Reference proteome</keyword>
<proteinExistence type="inferred from homology"/>
<dbReference type="EC" id="3.1.11.6" evidence="1"/>
<dbReference type="EMBL" id="BX950851">
    <property type="protein sequence ID" value="CAG76108.1"/>
    <property type="molecule type" value="Genomic_DNA"/>
</dbReference>
<dbReference type="RefSeq" id="WP_011094731.1">
    <property type="nucleotide sequence ID" value="NC_004547.2"/>
</dbReference>
<dbReference type="SMR" id="Q6D286"/>
<dbReference type="STRING" id="218491.ECA3210"/>
<dbReference type="KEGG" id="eca:ECA3210"/>
<dbReference type="PATRIC" id="fig|218491.5.peg.3252"/>
<dbReference type="eggNOG" id="COG1570">
    <property type="taxonomic scope" value="Bacteria"/>
</dbReference>
<dbReference type="HOGENOM" id="CLU_023625_3_1_6"/>
<dbReference type="OrthoDB" id="9802795at2"/>
<dbReference type="Proteomes" id="UP000007966">
    <property type="component" value="Chromosome"/>
</dbReference>
<dbReference type="GO" id="GO:0005737">
    <property type="term" value="C:cytoplasm"/>
    <property type="evidence" value="ECO:0007669"/>
    <property type="project" value="UniProtKB-SubCell"/>
</dbReference>
<dbReference type="GO" id="GO:0009318">
    <property type="term" value="C:exodeoxyribonuclease VII complex"/>
    <property type="evidence" value="ECO:0007669"/>
    <property type="project" value="InterPro"/>
</dbReference>
<dbReference type="GO" id="GO:0008855">
    <property type="term" value="F:exodeoxyribonuclease VII activity"/>
    <property type="evidence" value="ECO:0007669"/>
    <property type="project" value="UniProtKB-UniRule"/>
</dbReference>
<dbReference type="GO" id="GO:0003676">
    <property type="term" value="F:nucleic acid binding"/>
    <property type="evidence" value="ECO:0007669"/>
    <property type="project" value="InterPro"/>
</dbReference>
<dbReference type="GO" id="GO:0006308">
    <property type="term" value="P:DNA catabolic process"/>
    <property type="evidence" value="ECO:0007669"/>
    <property type="project" value="UniProtKB-UniRule"/>
</dbReference>
<dbReference type="CDD" id="cd04489">
    <property type="entry name" value="ExoVII_LU_OBF"/>
    <property type="match status" value="1"/>
</dbReference>
<dbReference type="HAMAP" id="MF_00378">
    <property type="entry name" value="Exonuc_7_L"/>
    <property type="match status" value="1"/>
</dbReference>
<dbReference type="InterPro" id="IPR003753">
    <property type="entry name" value="Exonuc_VII_L"/>
</dbReference>
<dbReference type="InterPro" id="IPR020579">
    <property type="entry name" value="Exonuc_VII_lsu_C"/>
</dbReference>
<dbReference type="InterPro" id="IPR025824">
    <property type="entry name" value="OB-fold_nuc-bd_dom"/>
</dbReference>
<dbReference type="NCBIfam" id="TIGR00237">
    <property type="entry name" value="xseA"/>
    <property type="match status" value="1"/>
</dbReference>
<dbReference type="PANTHER" id="PTHR30008">
    <property type="entry name" value="EXODEOXYRIBONUCLEASE 7 LARGE SUBUNIT"/>
    <property type="match status" value="1"/>
</dbReference>
<dbReference type="PANTHER" id="PTHR30008:SF0">
    <property type="entry name" value="EXODEOXYRIBONUCLEASE 7 LARGE SUBUNIT"/>
    <property type="match status" value="1"/>
</dbReference>
<dbReference type="Pfam" id="PF02601">
    <property type="entry name" value="Exonuc_VII_L"/>
    <property type="match status" value="1"/>
</dbReference>
<dbReference type="Pfam" id="PF13742">
    <property type="entry name" value="tRNA_anti_2"/>
    <property type="match status" value="1"/>
</dbReference>
<comment type="function">
    <text evidence="1">Bidirectionally degrades single-stranded DNA into large acid-insoluble oligonucleotides, which are then degraded further into small acid-soluble oligonucleotides.</text>
</comment>
<comment type="catalytic activity">
    <reaction evidence="1">
        <text>Exonucleolytic cleavage in either 5'- to 3'- or 3'- to 5'-direction to yield nucleoside 5'-phosphates.</text>
        <dbReference type="EC" id="3.1.11.6"/>
    </reaction>
</comment>
<comment type="subunit">
    <text evidence="1">Heterooligomer composed of large and small subunits.</text>
</comment>
<comment type="subcellular location">
    <subcellularLocation>
        <location evidence="1">Cytoplasm</location>
    </subcellularLocation>
</comment>
<comment type="similarity">
    <text evidence="1">Belongs to the XseA family.</text>
</comment>